<dbReference type="EMBL" id="CP000436">
    <property type="protein sequence ID" value="ABI25512.1"/>
    <property type="molecule type" value="Genomic_DNA"/>
</dbReference>
<dbReference type="SMR" id="Q0I4Z6"/>
<dbReference type="KEGG" id="hso:HS_1237"/>
<dbReference type="eggNOG" id="COG0828">
    <property type="taxonomic scope" value="Bacteria"/>
</dbReference>
<dbReference type="HOGENOM" id="CLU_159258_1_0_6"/>
<dbReference type="GO" id="GO:1990904">
    <property type="term" value="C:ribonucleoprotein complex"/>
    <property type="evidence" value="ECO:0007669"/>
    <property type="project" value="UniProtKB-KW"/>
</dbReference>
<dbReference type="GO" id="GO:0005840">
    <property type="term" value="C:ribosome"/>
    <property type="evidence" value="ECO:0007669"/>
    <property type="project" value="UniProtKB-KW"/>
</dbReference>
<dbReference type="GO" id="GO:0003735">
    <property type="term" value="F:structural constituent of ribosome"/>
    <property type="evidence" value="ECO:0007669"/>
    <property type="project" value="InterPro"/>
</dbReference>
<dbReference type="GO" id="GO:0006412">
    <property type="term" value="P:translation"/>
    <property type="evidence" value="ECO:0007669"/>
    <property type="project" value="UniProtKB-UniRule"/>
</dbReference>
<dbReference type="Gene3D" id="1.20.5.1150">
    <property type="entry name" value="Ribosomal protein S8"/>
    <property type="match status" value="1"/>
</dbReference>
<dbReference type="HAMAP" id="MF_00358">
    <property type="entry name" value="Ribosomal_bS21"/>
    <property type="match status" value="1"/>
</dbReference>
<dbReference type="InterPro" id="IPR001911">
    <property type="entry name" value="Ribosomal_bS21"/>
</dbReference>
<dbReference type="InterPro" id="IPR018278">
    <property type="entry name" value="Ribosomal_bS21_CS"/>
</dbReference>
<dbReference type="InterPro" id="IPR038380">
    <property type="entry name" value="Ribosomal_bS21_sf"/>
</dbReference>
<dbReference type="NCBIfam" id="TIGR00030">
    <property type="entry name" value="S21p"/>
    <property type="match status" value="1"/>
</dbReference>
<dbReference type="PANTHER" id="PTHR21109">
    <property type="entry name" value="MITOCHONDRIAL 28S RIBOSOMAL PROTEIN S21"/>
    <property type="match status" value="1"/>
</dbReference>
<dbReference type="PANTHER" id="PTHR21109:SF22">
    <property type="entry name" value="SMALL RIBOSOMAL SUBUNIT PROTEIN BS21"/>
    <property type="match status" value="1"/>
</dbReference>
<dbReference type="Pfam" id="PF01165">
    <property type="entry name" value="Ribosomal_S21"/>
    <property type="match status" value="1"/>
</dbReference>
<dbReference type="PRINTS" id="PR00976">
    <property type="entry name" value="RIBOSOMALS21"/>
</dbReference>
<dbReference type="PROSITE" id="PS01181">
    <property type="entry name" value="RIBOSOMAL_S21"/>
    <property type="match status" value="1"/>
</dbReference>
<accession>Q0I4Z6</accession>
<reference key="1">
    <citation type="journal article" date="2007" name="J. Bacteriol.">
        <title>Complete genome sequence of Haemophilus somnus (Histophilus somni) strain 129Pt and comparison to Haemophilus ducreyi 35000HP and Haemophilus influenzae Rd.</title>
        <authorList>
            <person name="Challacombe J.F."/>
            <person name="Duncan A.J."/>
            <person name="Brettin T.S."/>
            <person name="Bruce D."/>
            <person name="Chertkov O."/>
            <person name="Detter J.C."/>
            <person name="Han C.S."/>
            <person name="Misra M."/>
            <person name="Richardson P."/>
            <person name="Tapia R."/>
            <person name="Thayer N."/>
            <person name="Xie G."/>
            <person name="Inzana T.J."/>
        </authorList>
    </citation>
    <scope>NUCLEOTIDE SEQUENCE [LARGE SCALE GENOMIC DNA]</scope>
    <source>
        <strain>129Pt</strain>
    </source>
</reference>
<comment type="similarity">
    <text evidence="1">Belongs to the bacterial ribosomal protein bS21 family.</text>
</comment>
<sequence>MPVIKVRENESFDVALRRFKRSCEKAGILAEVRSREFYEKPTTIRKRENATRAKRHAKRVARENARNTRLY</sequence>
<organism>
    <name type="scientific">Histophilus somni (strain 129Pt)</name>
    <name type="common">Haemophilus somnus</name>
    <dbReference type="NCBI Taxonomy" id="205914"/>
    <lineage>
        <taxon>Bacteria</taxon>
        <taxon>Pseudomonadati</taxon>
        <taxon>Pseudomonadota</taxon>
        <taxon>Gammaproteobacteria</taxon>
        <taxon>Pasteurellales</taxon>
        <taxon>Pasteurellaceae</taxon>
        <taxon>Histophilus</taxon>
    </lineage>
</organism>
<proteinExistence type="inferred from homology"/>
<name>RS21_HISS1</name>
<keyword id="KW-0687">Ribonucleoprotein</keyword>
<keyword id="KW-0689">Ribosomal protein</keyword>
<gene>
    <name evidence="1" type="primary">rpsU</name>
    <name type="ordered locus">HS_1237</name>
</gene>
<evidence type="ECO:0000255" key="1">
    <source>
        <dbReference type="HAMAP-Rule" id="MF_00358"/>
    </source>
</evidence>
<evidence type="ECO:0000256" key="2">
    <source>
        <dbReference type="SAM" id="MobiDB-lite"/>
    </source>
</evidence>
<evidence type="ECO:0000305" key="3"/>
<protein>
    <recommendedName>
        <fullName evidence="1">Small ribosomal subunit protein bS21</fullName>
    </recommendedName>
    <alternativeName>
        <fullName evidence="3">30S ribosomal protein S21</fullName>
    </alternativeName>
</protein>
<feature type="chain" id="PRO_0000266688" description="Small ribosomal subunit protein bS21">
    <location>
        <begin position="1"/>
        <end position="71"/>
    </location>
</feature>
<feature type="region of interest" description="Disordered" evidence="2">
    <location>
        <begin position="47"/>
        <end position="71"/>
    </location>
</feature>
<feature type="compositionally biased region" description="Basic and acidic residues" evidence="2">
    <location>
        <begin position="60"/>
        <end position="71"/>
    </location>
</feature>